<proteinExistence type="evidence at protein level"/>
<keyword id="KW-0878">Amphibian defense peptide</keyword>
<keyword id="KW-0044">Antibiotic</keyword>
<keyword id="KW-0929">Antimicrobial</keyword>
<keyword id="KW-0903">Direct protein sequencing</keyword>
<keyword id="KW-1015">Disulfide bond</keyword>
<keyword id="KW-0295">Fungicide</keyword>
<keyword id="KW-0964">Secreted</keyword>
<name>ES2L_RANLU</name>
<feature type="peptide" id="PRO_0000044650" description="Esculentin-2L" evidence="2">
    <location>
        <begin position="1"/>
        <end position="37"/>
    </location>
</feature>
<feature type="disulfide bond" evidence="1">
    <location>
        <begin position="31"/>
        <end position="37"/>
    </location>
</feature>
<accession>P82827</accession>
<dbReference type="GO" id="GO:0005576">
    <property type="term" value="C:extracellular region"/>
    <property type="evidence" value="ECO:0007669"/>
    <property type="project" value="UniProtKB-SubCell"/>
</dbReference>
<dbReference type="GO" id="GO:0042742">
    <property type="term" value="P:defense response to bacterium"/>
    <property type="evidence" value="ECO:0007669"/>
    <property type="project" value="UniProtKB-KW"/>
</dbReference>
<dbReference type="GO" id="GO:0050832">
    <property type="term" value="P:defense response to fungus"/>
    <property type="evidence" value="ECO:0007669"/>
    <property type="project" value="UniProtKB-KW"/>
</dbReference>
<dbReference type="GO" id="GO:0031640">
    <property type="term" value="P:killing of cells of another organism"/>
    <property type="evidence" value="ECO:0007669"/>
    <property type="project" value="UniProtKB-KW"/>
</dbReference>
<comment type="function">
    <text evidence="2">Antibacterial activity against Gram-positive bacterium S.aureus and Gram-negative bacterium E.coli. Has activity against C.albicans.</text>
</comment>
<comment type="subcellular location">
    <subcellularLocation>
        <location evidence="2">Secreted</location>
    </subcellularLocation>
</comment>
<comment type="tissue specificity">
    <text evidence="5">Expressed by the skin glands.</text>
</comment>
<comment type="mass spectrometry"/>
<comment type="similarity">
    <text evidence="4">Belongs to the frog skin active peptide (FSAP) family. Esculentin subfamily.</text>
</comment>
<comment type="online information" name="The antimicrobial peptide database">
    <link uri="https://wangapd3.com/database/query_output.php?ID=00661"/>
</comment>
<evidence type="ECO:0000250" key="1"/>
<evidence type="ECO:0000269" key="2">
    <source>
    </source>
</evidence>
<evidence type="ECO:0000303" key="3">
    <source>
    </source>
</evidence>
<evidence type="ECO:0000305" key="4"/>
<evidence type="ECO:0000305" key="5">
    <source>
    </source>
</evidence>
<protein>
    <recommendedName>
        <fullName evidence="3">Esculentin-2L</fullName>
    </recommendedName>
</protein>
<organism>
    <name type="scientific">Rana luteiventris</name>
    <name type="common">Columbia spotted frog</name>
    <name type="synonym">Rana pretiosa luteiventris</name>
    <dbReference type="NCBI Taxonomy" id="58176"/>
    <lineage>
        <taxon>Eukaryota</taxon>
        <taxon>Metazoa</taxon>
        <taxon>Chordata</taxon>
        <taxon>Craniata</taxon>
        <taxon>Vertebrata</taxon>
        <taxon>Euteleostomi</taxon>
        <taxon>Amphibia</taxon>
        <taxon>Batrachia</taxon>
        <taxon>Anura</taxon>
        <taxon>Neobatrachia</taxon>
        <taxon>Ranoidea</taxon>
        <taxon>Ranidae</taxon>
        <taxon>Rana</taxon>
        <taxon>Rana</taxon>
    </lineage>
</organism>
<reference key="1">
    <citation type="journal article" date="2000" name="Eur. J. Biochem.">
        <title>Peptides with antimicrobial activity from four different families isolated from the skins of the North American frogs Rana luteiventris, Rana berlandieri and Rana pipiens.</title>
        <authorList>
            <person name="Goraya J."/>
            <person name="Wang Y."/>
            <person name="Li Z."/>
            <person name="O'Flaherty M."/>
            <person name="Knoop F.C."/>
            <person name="Platz J.E."/>
            <person name="Conlon J.M."/>
        </authorList>
    </citation>
    <scope>PROTEIN SEQUENCE</scope>
    <scope>FUNCTION</scope>
    <scope>MASS SPECTROMETRY</scope>
    <scope>SUBCELLULAR LOCATION</scope>
    <source>
        <tissue>Skin secretion</tissue>
    </source>
</reference>
<sequence>GILSLFTGGIKALGKTLFKMAGKAGAEHLACKATNQC</sequence>